<sequence>MAVPARTCGASWPGPVRTARPWPGRGPRPCPDPRGPASGPARPLLLLLPPLLLLPLLTAPGASAYSFPQQHTMQHWARRLEQEIDGVMRIFGGVQQLREIYKDNRNLFDVQENEPQKLVEKVAGDIESLLDRKVQALKRLADAAENFQKAHRWQDNIKEEDIMYYDAKADAELDDPESEDMERGSKTSALRLDFIEEPNFKNKVNYSYTAVQIPTDIYKGSTVILNELNWTEALENVFIENRRQDPTLLWQVFGSATGVTRYYPATPWRAPKKIDLYDVRRRPWYIQGASSPKDMVIIVDVSGSVSGLTLKLMKTSVCEMLDTLSDDDYVNVASFNEKAQPVSCFTHLVQANVRNKKVFKEAVQGMVAKGTTGYKAGFEYAFDQLQNSNITRANCNKMIMMFTDGGEDRVQDVFEKYNWPNRTVRVFTFSVGQHNYDVTPLQWMACTNKGYYFEIPSIGAIRINTQEYLDVLGRPMVLAGKDAKQVQWTNVYEDALGLGLVVTGTLPVFNLTQDGPGDKKNQLILGVMGIDVALNDIKRLTPNYTLGANGYVFAIDLNGYVLLHPNLKPQITNFREPVTLDFLDAELEDENKEEIRRSMIDGDKGHKQIRTLVKSLDERYIDEVIRNYTWVPIRSTNYSLGLVLPPYSTYYLQANLSDQILQVKLPISKLKDFEFLLPSSFESEGHVFIAPREYCKDLNASDNNTEFLKNFIELMEKVTPDSKQCNNFLLHNLILDTGITQQLVERVWRDQDLNTYSLLAVFAATDGGITRVFPNKAAEDWTENPEPFNASFYRRSLDNRGYIFKPPHQDSLLRPLELENDTVGVLVSTAVELSLGRRTLRPAVVGVKLDLEAWAEKFKVLASNRTHQDQPQKQCGPSSHCEMDCEVNNEDLLCVLIDDGGFLVLSNQNHQWDQVGRFFSEVDANLMLALYNNSFYTRKESYDYQAACAPQPPGNLGAAPRGVFVPTIADFLNLAWWTSAAAWSLFQQLLYGLIYHSWFQADPAEAEGSPETRESSCVMKQTQYYFGSVNASYNAIIDCGNCSRLFHAQRLTNTNLLFVVAEKPLCSQCEVGRLLQKETHCPADGPEQCELVQRPRYRTGPHICFDYNATEDTSDCGRGASFPPSLGVLVSLQLLLLLGLPPRPQPQIHSFTPSRRL</sequence>
<dbReference type="EMBL" id="AF486277">
    <property type="protein sequence ID" value="AAO14653.1"/>
    <property type="molecule type" value="mRNA"/>
</dbReference>
<dbReference type="RefSeq" id="NP_783182.1">
    <property type="nucleotide sequence ID" value="NM_175592.2"/>
</dbReference>
<dbReference type="SMR" id="Q8CFG6"/>
<dbReference type="BioGRID" id="256785">
    <property type="interactions" value="1"/>
</dbReference>
<dbReference type="FunCoup" id="Q8CFG6">
    <property type="interactions" value="1561"/>
</dbReference>
<dbReference type="IntAct" id="Q8CFG6">
    <property type="interactions" value="3"/>
</dbReference>
<dbReference type="STRING" id="10116.ENSRNOP00000021216"/>
<dbReference type="ChEMBL" id="CHEMBL3988639"/>
<dbReference type="GlyCosmos" id="Q8CFG6">
    <property type="glycosylation" value="7 sites, No reported glycans"/>
</dbReference>
<dbReference type="GlyGen" id="Q8CFG6">
    <property type="glycosylation" value="7 sites"/>
</dbReference>
<dbReference type="PhosphoSitePlus" id="Q8CFG6"/>
<dbReference type="PaxDb" id="10116-ENSRNOP00000021216"/>
<dbReference type="GeneID" id="300992"/>
<dbReference type="KEGG" id="rno:300992"/>
<dbReference type="UCSC" id="RGD:631360">
    <property type="organism name" value="rat"/>
</dbReference>
<dbReference type="AGR" id="RGD:631360"/>
<dbReference type="CTD" id="9254"/>
<dbReference type="RGD" id="631360">
    <property type="gene designation" value="Cacna2d2"/>
</dbReference>
<dbReference type="eggNOG" id="KOG2353">
    <property type="taxonomic scope" value="Eukaryota"/>
</dbReference>
<dbReference type="InParanoid" id="Q8CFG6"/>
<dbReference type="OrthoDB" id="31907at9989"/>
<dbReference type="PhylomeDB" id="Q8CFG6"/>
<dbReference type="Reactome" id="R-RNO-112308">
    <property type="pathway name" value="Presynaptic depolarization and calcium channel opening"/>
</dbReference>
<dbReference type="Reactome" id="R-RNO-422356">
    <property type="pathway name" value="Regulation of insulin secretion"/>
</dbReference>
<dbReference type="Reactome" id="R-RNO-5576892">
    <property type="pathway name" value="Phase 0 - rapid depolarisation"/>
</dbReference>
<dbReference type="Reactome" id="R-RNO-5576893">
    <property type="pathway name" value="Phase 2 - plateau phase"/>
</dbReference>
<dbReference type="PRO" id="PR:Q8CFG6"/>
<dbReference type="Proteomes" id="UP000002494">
    <property type="component" value="Unplaced"/>
</dbReference>
<dbReference type="GO" id="GO:0098982">
    <property type="term" value="C:GABA-ergic synapse"/>
    <property type="evidence" value="ECO:0000266"/>
    <property type="project" value="RGD"/>
</dbReference>
<dbReference type="GO" id="GO:0048787">
    <property type="term" value="C:presynaptic active zone membrane"/>
    <property type="evidence" value="ECO:0000266"/>
    <property type="project" value="RGD"/>
</dbReference>
<dbReference type="GO" id="GO:0005891">
    <property type="term" value="C:voltage-gated calcium channel complex"/>
    <property type="evidence" value="ECO:0000266"/>
    <property type="project" value="RGD"/>
</dbReference>
<dbReference type="GO" id="GO:0005246">
    <property type="term" value="F:calcium channel regulator activity"/>
    <property type="evidence" value="ECO:0000304"/>
    <property type="project" value="RGD"/>
</dbReference>
<dbReference type="GO" id="GO:0046872">
    <property type="term" value="F:metal ion binding"/>
    <property type="evidence" value="ECO:0007669"/>
    <property type="project" value="UniProtKB-KW"/>
</dbReference>
<dbReference type="GO" id="GO:0005245">
    <property type="term" value="F:voltage-gated calcium channel activity"/>
    <property type="evidence" value="ECO:0000314"/>
    <property type="project" value="RGD"/>
</dbReference>
<dbReference type="GO" id="GO:0006816">
    <property type="term" value="P:calcium ion transport"/>
    <property type="evidence" value="ECO:0000314"/>
    <property type="project" value="RGD"/>
</dbReference>
<dbReference type="GO" id="GO:0055001">
    <property type="term" value="P:muscle cell development"/>
    <property type="evidence" value="ECO:0000266"/>
    <property type="project" value="RGD"/>
</dbReference>
<dbReference type="GO" id="GO:0007528">
    <property type="term" value="P:neuromuscular junction development"/>
    <property type="evidence" value="ECO:0000266"/>
    <property type="project" value="RGD"/>
</dbReference>
<dbReference type="GO" id="GO:0035265">
    <property type="term" value="P:organ growth"/>
    <property type="evidence" value="ECO:0000266"/>
    <property type="project" value="RGD"/>
</dbReference>
<dbReference type="GO" id="GO:0046622">
    <property type="term" value="P:positive regulation of organ growth"/>
    <property type="evidence" value="ECO:0000266"/>
    <property type="project" value="RGD"/>
</dbReference>
<dbReference type="GO" id="GO:0040014">
    <property type="term" value="P:regulation of multicellular organism growth"/>
    <property type="evidence" value="ECO:0000266"/>
    <property type="project" value="RGD"/>
</dbReference>
<dbReference type="GO" id="GO:0098696">
    <property type="term" value="P:regulation of neurotransmitter receptor localization to postsynaptic specialization membrane"/>
    <property type="evidence" value="ECO:0000266"/>
    <property type="project" value="RGD"/>
</dbReference>
<dbReference type="GO" id="GO:0060024">
    <property type="term" value="P:rhythmic synaptic transmission"/>
    <property type="evidence" value="ECO:0000266"/>
    <property type="project" value="RGD"/>
</dbReference>
<dbReference type="CDD" id="cd01463">
    <property type="entry name" value="vWA_VGCC_like"/>
    <property type="match status" value="1"/>
</dbReference>
<dbReference type="FunFam" id="3.30.450.20:FF:000014">
    <property type="entry name" value="voltage-dependent calcium channel subunit alpha-2/delta-1 isoform X1"/>
    <property type="match status" value="1"/>
</dbReference>
<dbReference type="FunFam" id="3.40.50.410:FF:000006">
    <property type="entry name" value="voltage-dependent calcium channel subunit alpha-2/delta-1 isoform X1"/>
    <property type="match status" value="1"/>
</dbReference>
<dbReference type="Gene3D" id="3.30.450.20">
    <property type="entry name" value="PAS domain"/>
    <property type="match status" value="1"/>
</dbReference>
<dbReference type="Gene3D" id="3.40.50.410">
    <property type="entry name" value="von Willebrand factor, type A domain"/>
    <property type="match status" value="1"/>
</dbReference>
<dbReference type="InterPro" id="IPR051173">
    <property type="entry name" value="Ca_channel_alpha-2/delta"/>
</dbReference>
<dbReference type="InterPro" id="IPR013680">
    <property type="entry name" value="VDCC_a2/dsu"/>
</dbReference>
<dbReference type="InterPro" id="IPR013608">
    <property type="entry name" value="VWA_N"/>
</dbReference>
<dbReference type="InterPro" id="IPR002035">
    <property type="entry name" value="VWF_A"/>
</dbReference>
<dbReference type="InterPro" id="IPR036465">
    <property type="entry name" value="vWFA_dom_sf"/>
</dbReference>
<dbReference type="PANTHER" id="PTHR10166">
    <property type="entry name" value="VOLTAGE-DEPENDENT CALCIUM CHANNEL SUBUNIT ALPHA-2/DELTA-RELATED"/>
    <property type="match status" value="1"/>
</dbReference>
<dbReference type="PANTHER" id="PTHR10166:SF7">
    <property type="entry name" value="VOLTAGE-DEPENDENT CALCIUM CHANNEL SUBUNIT ALPHA-2_DELTA-2"/>
    <property type="match status" value="1"/>
</dbReference>
<dbReference type="Pfam" id="PF08473">
    <property type="entry name" value="VGCC_alpha2"/>
    <property type="match status" value="1"/>
</dbReference>
<dbReference type="Pfam" id="PF00092">
    <property type="entry name" value="VWA"/>
    <property type="match status" value="1"/>
</dbReference>
<dbReference type="Pfam" id="PF08399">
    <property type="entry name" value="VWA_N"/>
    <property type="match status" value="1"/>
</dbReference>
<dbReference type="SMART" id="SM00327">
    <property type="entry name" value="VWA"/>
    <property type="match status" value="1"/>
</dbReference>
<dbReference type="SUPFAM" id="SSF53300">
    <property type="entry name" value="vWA-like"/>
    <property type="match status" value="1"/>
</dbReference>
<dbReference type="PROSITE" id="PS50234">
    <property type="entry name" value="VWFA"/>
    <property type="match status" value="1"/>
</dbReference>
<keyword id="KW-0106">Calcium</keyword>
<keyword id="KW-0107">Calcium channel</keyword>
<keyword id="KW-0109">Calcium transport</keyword>
<keyword id="KW-1015">Disulfide bond</keyword>
<keyword id="KW-0325">Glycoprotein</keyword>
<keyword id="KW-0407">Ion channel</keyword>
<keyword id="KW-0406">Ion transport</keyword>
<keyword id="KW-0472">Membrane</keyword>
<keyword id="KW-0479">Metal-binding</keyword>
<keyword id="KW-1185">Reference proteome</keyword>
<keyword id="KW-0732">Signal</keyword>
<keyword id="KW-0812">Transmembrane</keyword>
<keyword id="KW-1133">Transmembrane helix</keyword>
<keyword id="KW-0813">Transport</keyword>
<keyword id="KW-0851">Voltage-gated channel</keyword>
<proteinExistence type="evidence at transcript level"/>
<comment type="function">
    <text evidence="1">The alpha-2/delta subunit of voltage-dependent calcium channels regulates calcium current density and activation/inactivation kinetics of the calcium channel. Acts as a regulatory subunit for P/Q-type calcium channel (CACNA1A), N-type (CACNA1B), L-type (CACNA1C OR CACNA1D) and possibly T-type (CACNA1G). Overexpression induces apoptosis (By similarity).</text>
</comment>
<comment type="subunit">
    <text evidence="1">Dimer formed of alpha-2-2 and delta-2 chains; disulfide-linked. Voltage-dependent calcium channels are multisubunit complexes, consisting of alpha-1 (CACNA1), alpha-2 (CACNA2D), beta (CACNB) and delta (CACNA2D) subunits in a 1:1:1:1 ratio (By similarity).</text>
</comment>
<comment type="subcellular location">
    <subcellularLocation>
        <location evidence="7">Membrane</location>
        <topology evidence="7">Single-pass type I membrane protein</topology>
    </subcellularLocation>
    <text evidence="1">Colocalizes with CACNA1A in lipid raft fractions.</text>
</comment>
<comment type="tissue specificity">
    <text evidence="5 6">In heart, it is highly expressed in atrium and at lower level in ventricle.</text>
</comment>
<comment type="domain">
    <text evidence="1">The MIDAS-like motif in the VWFA domain binds divalent metal cations and is required to promote trafficking of the alpha-1 (CACNA1) subunit to the plasma membrane by an integrin-like switch.</text>
</comment>
<comment type="PTM">
    <text evidence="1">N-glycosylated.</text>
</comment>
<comment type="PTM">
    <text evidence="1">May be proteolytically processed into subunits alpha-2-2 and delta-2 that are disulfide-linked. It is however unclear whether such cleavage really takes place in vivo and has a functional role (By similarity).</text>
</comment>
<comment type="miscellaneous">
    <text evidence="1">Binds gabapentin, an antiepileptic drug.</text>
</comment>
<comment type="similarity">
    <text evidence="7">Belongs to the calcium channel subunit alpha-2/delta family.</text>
</comment>
<name>CA2D2_RAT</name>
<accession>Q8CFG6</accession>
<evidence type="ECO:0000250" key="1"/>
<evidence type="ECO:0000255" key="2"/>
<evidence type="ECO:0000255" key="3">
    <source>
        <dbReference type="PROSITE-ProRule" id="PRU00219"/>
    </source>
</evidence>
<evidence type="ECO:0000256" key="4">
    <source>
        <dbReference type="SAM" id="MobiDB-lite"/>
    </source>
</evidence>
<evidence type="ECO:0000269" key="5">
    <source>
    </source>
</evidence>
<evidence type="ECO:0000269" key="6">
    <source>
    </source>
</evidence>
<evidence type="ECO:0000305" key="7"/>
<feature type="signal peptide" evidence="2">
    <location>
        <begin position="1"/>
        <end position="18"/>
    </location>
</feature>
<feature type="chain" id="PRO_0000304643" description="Voltage-dependent calcium channel subunit alpha-2/delta-2">
    <location>
        <begin position="19"/>
        <end position="1157"/>
    </location>
</feature>
<feature type="chain" id="PRO_0000304644" description="Voltage-dependent calcium channel subunit alpha-2-2" evidence="2">
    <location>
        <begin position="19"/>
        <end position="1004"/>
    </location>
</feature>
<feature type="chain" id="PRO_0000304645" description="Voltage-dependent calcium channel subunit delta-2" evidence="2">
    <location>
        <begin position="1005"/>
        <end position="1157"/>
    </location>
</feature>
<feature type="topological domain" description="Extracellular" evidence="2">
    <location>
        <begin position="19"/>
        <end position="1119"/>
    </location>
</feature>
<feature type="transmembrane region" description="Helical" evidence="2">
    <location>
        <begin position="1120"/>
        <end position="1140"/>
    </location>
</feature>
<feature type="topological domain" description="Cytoplasmic" evidence="2">
    <location>
        <begin position="1141"/>
        <end position="1157"/>
    </location>
</feature>
<feature type="domain" description="VWFA" evidence="3">
    <location>
        <begin position="294"/>
        <end position="472"/>
    </location>
</feature>
<feature type="domain" description="Cache">
    <location>
        <begin position="488"/>
        <end position="577"/>
    </location>
</feature>
<feature type="region of interest" description="Disordered" evidence="4">
    <location>
        <begin position="1"/>
        <end position="37"/>
    </location>
</feature>
<feature type="short sequence motif" description="MIDAS-like motif">
    <location>
        <begin position="300"/>
        <end position="304"/>
    </location>
</feature>
<feature type="compositionally biased region" description="Pro residues" evidence="4">
    <location>
        <begin position="24"/>
        <end position="34"/>
    </location>
</feature>
<feature type="binding site" evidence="1">
    <location>
        <position position="300"/>
    </location>
    <ligand>
        <name>a divalent metal cation</name>
        <dbReference type="ChEBI" id="CHEBI:60240"/>
    </ligand>
</feature>
<feature type="binding site" evidence="1">
    <location>
        <position position="302"/>
    </location>
    <ligand>
        <name>a divalent metal cation</name>
        <dbReference type="ChEBI" id="CHEBI:60240"/>
    </ligand>
</feature>
<feature type="binding site" evidence="1">
    <location>
        <position position="304"/>
    </location>
    <ligand>
        <name>a divalent metal cation</name>
        <dbReference type="ChEBI" id="CHEBI:60240"/>
    </ligand>
</feature>
<feature type="glycosylation site" description="N-linked (GlcNAc...) asparagine" evidence="2">
    <location>
        <position position="205"/>
    </location>
</feature>
<feature type="glycosylation site" description="N-linked (GlcNAc...) asparagine" evidence="2">
    <location>
        <position position="389"/>
    </location>
</feature>
<feature type="glycosylation site" description="N-linked (GlcNAc...) asparagine" evidence="2">
    <location>
        <position position="421"/>
    </location>
</feature>
<feature type="glycosylation site" description="N-linked (GlcNAc...) asparagine" evidence="2">
    <location>
        <position position="510"/>
    </location>
</feature>
<feature type="glycosylation site" description="N-linked (GlcNAc...) asparagine" evidence="2">
    <location>
        <position position="543"/>
    </location>
</feature>
<feature type="glycosylation site" description="N-linked (GlcNAc...) asparagine" evidence="2">
    <location>
        <position position="627"/>
    </location>
</feature>
<feature type="glycosylation site" description="N-linked (GlcNAc...) asparagine" evidence="2">
    <location>
        <position position="864"/>
    </location>
</feature>
<feature type="disulfide bond" description="Interchain (between alpha-2-2 and delta-2 chains)" evidence="1">
    <location>
        <begin position="446"/>
        <end position="1104"/>
    </location>
</feature>
<protein>
    <recommendedName>
        <fullName>Voltage-dependent calcium channel subunit alpha-2/delta-2</fullName>
    </recommendedName>
    <alternativeName>
        <fullName>Voltage-gated calcium channel subunit alpha-2/delta-2</fullName>
    </alternativeName>
    <component>
        <recommendedName>
            <fullName>Voltage-dependent calcium channel subunit alpha-2-2</fullName>
        </recommendedName>
    </component>
    <component>
        <recommendedName>
            <fullName>Voltage-dependent calcium channel subunit delta-2</fullName>
        </recommendedName>
    </component>
</protein>
<reference key="1">
    <citation type="journal article" date="2003" name="J. Mol. Cell. Cardiol.">
        <title>Molecular cloning of calcium channel alpha(2)delta-subunits from rat atria and the differential regulation of their expression by IGF-1.</title>
        <authorList>
            <person name="Chu P.-J."/>
            <person name="Best P.M."/>
        </authorList>
    </citation>
    <scope>NUCLEOTIDE SEQUENCE [MRNA]</scope>
    <scope>TISSUE SPECIFICITY</scope>
    <source>
        <strain>Sprague-Dawley</strain>
        <tissue>Heart atrium</tissue>
    </source>
</reference>
<reference key="2">
    <citation type="journal article" date="2006" name="Jpn. Circ. J.">
        <title>Molecular and electrophysiological differences in the L-type Ca2+ channel of the atrium and ventricle of rat hearts.</title>
        <authorList>
            <person name="Hatano S."/>
            <person name="Yamashita T."/>
            <person name="Sekiguchi A."/>
            <person name="Iwasaki Y."/>
            <person name="Nakazawa K."/>
            <person name="Sagara K."/>
            <person name="Iinuma H."/>
            <person name="Aizawa T."/>
            <person name="Fu L.-T."/>
        </authorList>
    </citation>
    <scope>TISSUE SPECIFICITY</scope>
</reference>
<organism>
    <name type="scientific">Rattus norvegicus</name>
    <name type="common">Rat</name>
    <dbReference type="NCBI Taxonomy" id="10116"/>
    <lineage>
        <taxon>Eukaryota</taxon>
        <taxon>Metazoa</taxon>
        <taxon>Chordata</taxon>
        <taxon>Craniata</taxon>
        <taxon>Vertebrata</taxon>
        <taxon>Euteleostomi</taxon>
        <taxon>Mammalia</taxon>
        <taxon>Eutheria</taxon>
        <taxon>Euarchontoglires</taxon>
        <taxon>Glires</taxon>
        <taxon>Rodentia</taxon>
        <taxon>Myomorpha</taxon>
        <taxon>Muroidea</taxon>
        <taxon>Muridae</taxon>
        <taxon>Murinae</taxon>
        <taxon>Rattus</taxon>
    </lineage>
</organism>
<gene>
    <name type="primary">Cacna2d2</name>
</gene>